<name>YE0C_SCHPO</name>
<evidence type="ECO:0000250" key="1"/>
<evidence type="ECO:0000255" key="2"/>
<evidence type="ECO:0000255" key="3">
    <source>
        <dbReference type="PROSITE-ProRule" id="PRU00716"/>
    </source>
</evidence>
<evidence type="ECO:0000269" key="4">
    <source>
    </source>
</evidence>
<evidence type="ECO:0000305" key="5"/>
<protein>
    <recommendedName>
        <fullName>Uncharacterized FAD-binding protein C17H9.12c</fullName>
    </recommendedName>
</protein>
<reference key="1">
    <citation type="journal article" date="2002" name="Nature">
        <title>The genome sequence of Schizosaccharomyces pombe.</title>
        <authorList>
            <person name="Wood V."/>
            <person name="Gwilliam R."/>
            <person name="Rajandream M.A."/>
            <person name="Lyne M.H."/>
            <person name="Lyne R."/>
            <person name="Stewart A."/>
            <person name="Sgouros J.G."/>
            <person name="Peat N."/>
            <person name="Hayles J."/>
            <person name="Baker S.G."/>
            <person name="Basham D."/>
            <person name="Bowman S."/>
            <person name="Brooks K."/>
            <person name="Brown D."/>
            <person name="Brown S."/>
            <person name="Chillingworth T."/>
            <person name="Churcher C.M."/>
            <person name="Collins M."/>
            <person name="Connor R."/>
            <person name="Cronin A."/>
            <person name="Davis P."/>
            <person name="Feltwell T."/>
            <person name="Fraser A."/>
            <person name="Gentles S."/>
            <person name="Goble A."/>
            <person name="Hamlin N."/>
            <person name="Harris D.E."/>
            <person name="Hidalgo J."/>
            <person name="Hodgson G."/>
            <person name="Holroyd S."/>
            <person name="Hornsby T."/>
            <person name="Howarth S."/>
            <person name="Huckle E.J."/>
            <person name="Hunt S."/>
            <person name="Jagels K."/>
            <person name="James K.D."/>
            <person name="Jones L."/>
            <person name="Jones M."/>
            <person name="Leather S."/>
            <person name="McDonald S."/>
            <person name="McLean J."/>
            <person name="Mooney P."/>
            <person name="Moule S."/>
            <person name="Mungall K.L."/>
            <person name="Murphy L.D."/>
            <person name="Niblett D."/>
            <person name="Odell C."/>
            <person name="Oliver K."/>
            <person name="O'Neil S."/>
            <person name="Pearson D."/>
            <person name="Quail M.A."/>
            <person name="Rabbinowitsch E."/>
            <person name="Rutherford K.M."/>
            <person name="Rutter S."/>
            <person name="Saunders D."/>
            <person name="Seeger K."/>
            <person name="Sharp S."/>
            <person name="Skelton J."/>
            <person name="Simmonds M.N."/>
            <person name="Squares R."/>
            <person name="Squares S."/>
            <person name="Stevens K."/>
            <person name="Taylor K."/>
            <person name="Taylor R.G."/>
            <person name="Tivey A."/>
            <person name="Walsh S.V."/>
            <person name="Warren T."/>
            <person name="Whitehead S."/>
            <person name="Woodward J.R."/>
            <person name="Volckaert G."/>
            <person name="Aert R."/>
            <person name="Robben J."/>
            <person name="Grymonprez B."/>
            <person name="Weltjens I."/>
            <person name="Vanstreels E."/>
            <person name="Rieger M."/>
            <person name="Schaefer M."/>
            <person name="Mueller-Auer S."/>
            <person name="Gabel C."/>
            <person name="Fuchs M."/>
            <person name="Duesterhoeft A."/>
            <person name="Fritzc C."/>
            <person name="Holzer E."/>
            <person name="Moestl D."/>
            <person name="Hilbert H."/>
            <person name="Borzym K."/>
            <person name="Langer I."/>
            <person name="Beck A."/>
            <person name="Lehrach H."/>
            <person name="Reinhardt R."/>
            <person name="Pohl T.M."/>
            <person name="Eger P."/>
            <person name="Zimmermann W."/>
            <person name="Wedler H."/>
            <person name="Wambutt R."/>
            <person name="Purnelle B."/>
            <person name="Goffeau A."/>
            <person name="Cadieu E."/>
            <person name="Dreano S."/>
            <person name="Gloux S."/>
            <person name="Lelaure V."/>
            <person name="Mottier S."/>
            <person name="Galibert F."/>
            <person name="Aves S.J."/>
            <person name="Xiang Z."/>
            <person name="Hunt C."/>
            <person name="Moore K."/>
            <person name="Hurst S.M."/>
            <person name="Lucas M."/>
            <person name="Rochet M."/>
            <person name="Gaillardin C."/>
            <person name="Tallada V.A."/>
            <person name="Garzon A."/>
            <person name="Thode G."/>
            <person name="Daga R.R."/>
            <person name="Cruzado L."/>
            <person name="Jimenez J."/>
            <person name="Sanchez M."/>
            <person name="del Rey F."/>
            <person name="Benito J."/>
            <person name="Dominguez A."/>
            <person name="Revuelta J.L."/>
            <person name="Moreno S."/>
            <person name="Armstrong J."/>
            <person name="Forsburg S.L."/>
            <person name="Cerutti L."/>
            <person name="Lowe T."/>
            <person name="McCombie W.R."/>
            <person name="Paulsen I."/>
            <person name="Potashkin J."/>
            <person name="Shpakovski G.V."/>
            <person name="Ussery D."/>
            <person name="Barrell B.G."/>
            <person name="Nurse P."/>
        </authorList>
    </citation>
    <scope>NUCLEOTIDE SEQUENCE [LARGE SCALE GENOMIC DNA]</scope>
    <source>
        <strain>972 / ATCC 24843</strain>
    </source>
</reference>
<reference key="2">
    <citation type="journal article" date="2006" name="Nat. Biotechnol.">
        <title>ORFeome cloning and global analysis of protein localization in the fission yeast Schizosaccharomyces pombe.</title>
        <authorList>
            <person name="Matsuyama A."/>
            <person name="Arai R."/>
            <person name="Yashiroda Y."/>
            <person name="Shirai A."/>
            <person name="Kamata A."/>
            <person name="Sekido S."/>
            <person name="Kobayashi Y."/>
            <person name="Hashimoto A."/>
            <person name="Hamamoto M."/>
            <person name="Hiraoka Y."/>
            <person name="Horinouchi S."/>
            <person name="Yoshida M."/>
        </authorList>
    </citation>
    <scope>SUBCELLULAR LOCATION [LARGE SCALE ANALYSIS]</scope>
</reference>
<comment type="cofactor">
    <cofactor evidence="1">
        <name>FAD</name>
        <dbReference type="ChEBI" id="CHEBI:57692"/>
    </cofactor>
</comment>
<comment type="subcellular location">
    <subcellularLocation>
        <location evidence="4">Mitochondrion outer membrane</location>
        <topology evidence="4">Single-pass membrane protein</topology>
    </subcellularLocation>
</comment>
<comment type="similarity">
    <text evidence="5">Belongs to the flavoprotein pyridine nucleotide cytochrome reductase family.</text>
</comment>
<keyword id="KW-0274">FAD</keyword>
<keyword id="KW-0285">Flavoprotein</keyword>
<keyword id="KW-0472">Membrane</keyword>
<keyword id="KW-0496">Mitochondrion</keyword>
<keyword id="KW-1000">Mitochondrion outer membrane</keyword>
<keyword id="KW-0520">NAD</keyword>
<keyword id="KW-0560">Oxidoreductase</keyword>
<keyword id="KW-1185">Reference proteome</keyword>
<keyword id="KW-0812">Transmembrane</keyword>
<keyword id="KW-1133">Transmembrane helix</keyword>
<sequence length="266" mass="29375">MSSSTYRKLPKILAAGLAIGCAGGYYAYKNSNKPPGLNPEIYAPFTVNKITELTSDASLFSLVPQSPSEHLTTLEPIAKVTIRDPSMQVQRPYTPLYLDANELKFFIRKYEEGPVSSYIHSKKEGDTIELRGPFKTTKLDCTKYPRIVAIVAGTGIAPIYQLAQSVKSPVDIVYCSRPGQPPLLKEELEKECPNVRVKSVQNRLVNIHDILDWDNVTVPLKDTLCIVCGSQKFVSTIAGPKADYGARQGEVKGLLSNNPFGKVWKL</sequence>
<proteinExistence type="inferred from homology"/>
<gene>
    <name type="ORF">SPAC17H9.12c</name>
</gene>
<organism>
    <name type="scientific">Schizosaccharomyces pombe (strain 972 / ATCC 24843)</name>
    <name type="common">Fission yeast</name>
    <dbReference type="NCBI Taxonomy" id="284812"/>
    <lineage>
        <taxon>Eukaryota</taxon>
        <taxon>Fungi</taxon>
        <taxon>Dikarya</taxon>
        <taxon>Ascomycota</taxon>
        <taxon>Taphrinomycotina</taxon>
        <taxon>Schizosaccharomycetes</taxon>
        <taxon>Schizosaccharomycetales</taxon>
        <taxon>Schizosaccharomycetaceae</taxon>
        <taxon>Schizosaccharomyces</taxon>
    </lineage>
</organism>
<dbReference type="EMBL" id="CU329670">
    <property type="protein sequence ID" value="CAB11221.1"/>
    <property type="molecule type" value="Genomic_DNA"/>
</dbReference>
<dbReference type="PIR" id="T37878">
    <property type="entry name" value="T37878"/>
</dbReference>
<dbReference type="SMR" id="O13809"/>
<dbReference type="BioGRID" id="278716">
    <property type="interactions" value="16"/>
</dbReference>
<dbReference type="FunCoup" id="O13809">
    <property type="interactions" value="27"/>
</dbReference>
<dbReference type="STRING" id="284812.O13809"/>
<dbReference type="iPTMnet" id="O13809"/>
<dbReference type="PaxDb" id="4896-SPAC17H9.12c.1"/>
<dbReference type="EnsemblFungi" id="SPAC17H9.12c.1">
    <property type="protein sequence ID" value="SPAC17H9.12c.1:pep"/>
    <property type="gene ID" value="SPAC17H9.12c"/>
</dbReference>
<dbReference type="KEGG" id="spo:2542246"/>
<dbReference type="PomBase" id="SPAC17H9.12c"/>
<dbReference type="VEuPathDB" id="FungiDB:SPAC17H9.12c"/>
<dbReference type="eggNOG" id="KOG0534">
    <property type="taxonomic scope" value="Eukaryota"/>
</dbReference>
<dbReference type="HOGENOM" id="CLU_1062293_0_0_1"/>
<dbReference type="InParanoid" id="O13809"/>
<dbReference type="OMA" id="PVDIVYC"/>
<dbReference type="PhylomeDB" id="O13809"/>
<dbReference type="PRO" id="PR:O13809"/>
<dbReference type="Proteomes" id="UP000002485">
    <property type="component" value="Chromosome I"/>
</dbReference>
<dbReference type="GO" id="GO:0031314">
    <property type="term" value="C:extrinsic component of mitochondrial inner membrane"/>
    <property type="evidence" value="ECO:0000266"/>
    <property type="project" value="PomBase"/>
</dbReference>
<dbReference type="GO" id="GO:0005741">
    <property type="term" value="C:mitochondrial outer membrane"/>
    <property type="evidence" value="ECO:0007669"/>
    <property type="project" value="UniProtKB-SubCell"/>
</dbReference>
<dbReference type="GO" id="GO:0005739">
    <property type="term" value="C:mitochondrion"/>
    <property type="evidence" value="ECO:0007005"/>
    <property type="project" value="PomBase"/>
</dbReference>
<dbReference type="GO" id="GO:0016491">
    <property type="term" value="F:oxidoreductase activity"/>
    <property type="evidence" value="ECO:0000266"/>
    <property type="project" value="PomBase"/>
</dbReference>
<dbReference type="GO" id="GO:0007005">
    <property type="term" value="P:mitochondrion organization"/>
    <property type="evidence" value="ECO:0000305"/>
    <property type="project" value="PomBase"/>
</dbReference>
<dbReference type="CDD" id="cd06183">
    <property type="entry name" value="cyt_b5_reduct_like"/>
    <property type="match status" value="1"/>
</dbReference>
<dbReference type="Gene3D" id="3.40.50.80">
    <property type="entry name" value="Nucleotide-binding domain of ferredoxin-NADP reductase (FNR) module"/>
    <property type="match status" value="1"/>
</dbReference>
<dbReference type="Gene3D" id="2.40.30.10">
    <property type="entry name" value="Translation factors"/>
    <property type="match status" value="1"/>
</dbReference>
<dbReference type="InterPro" id="IPR001834">
    <property type="entry name" value="CBR-like"/>
</dbReference>
<dbReference type="InterPro" id="IPR008333">
    <property type="entry name" value="Cbr1-like_FAD-bd_dom"/>
</dbReference>
<dbReference type="InterPro" id="IPR017927">
    <property type="entry name" value="FAD-bd_FR_type"/>
</dbReference>
<dbReference type="InterPro" id="IPR039261">
    <property type="entry name" value="FNR_nucleotide-bd"/>
</dbReference>
<dbReference type="InterPro" id="IPR017938">
    <property type="entry name" value="Riboflavin_synthase-like_b-brl"/>
</dbReference>
<dbReference type="PANTHER" id="PTHR19370">
    <property type="entry name" value="NADH-CYTOCHROME B5 REDUCTASE"/>
    <property type="match status" value="1"/>
</dbReference>
<dbReference type="PANTHER" id="PTHR19370:SF184">
    <property type="entry name" value="NADH-CYTOCHROME B5 REDUCTASE-LIKE"/>
    <property type="match status" value="1"/>
</dbReference>
<dbReference type="Pfam" id="PF00970">
    <property type="entry name" value="FAD_binding_6"/>
    <property type="match status" value="1"/>
</dbReference>
<dbReference type="PRINTS" id="PR00406">
    <property type="entry name" value="CYTB5RDTASE"/>
</dbReference>
<dbReference type="SUPFAM" id="SSF52343">
    <property type="entry name" value="Ferredoxin reductase-like, C-terminal NADP-linked domain"/>
    <property type="match status" value="1"/>
</dbReference>
<dbReference type="SUPFAM" id="SSF63380">
    <property type="entry name" value="Riboflavin synthase domain-like"/>
    <property type="match status" value="1"/>
</dbReference>
<dbReference type="PROSITE" id="PS51384">
    <property type="entry name" value="FAD_FR"/>
    <property type="match status" value="1"/>
</dbReference>
<accession>O13809</accession>
<feature type="chain" id="PRO_0000310846" description="Uncharacterized FAD-binding protein C17H9.12c">
    <location>
        <begin position="1"/>
        <end position="266"/>
    </location>
</feature>
<feature type="transmembrane region" description="Helical" evidence="2">
    <location>
        <begin position="12"/>
        <end position="28"/>
    </location>
</feature>
<feature type="domain" description="FAD-binding FR-type" evidence="3">
    <location>
        <begin position="40"/>
        <end position="140"/>
    </location>
</feature>